<sequence length="287" mass="30237">MTVTSPIVDRYAVFGHPIGHSKSPFIHGQFAALTQESLTYEAILAPIDGFEASLKSFFSSGGKGANVTVPFKEQAFALCDSLSAEAALAGAVNTLSLLADGSIRGDNTDGLGLVADLISHLGSLQHKRVLLVGAGGAARGCILPLLNAGVGQLVITNRTQTKAKDLVDIFSQLEEGIYKDKLQALSMSELTGEFELVINSTSASLAGELPPLPQSIIGSTTVCYDMMYGAMPTAFNQWALQQGAAKVIDGLGMLVGQAAKSFALWRTVEPDTAVVLKLLREKLQLDI</sequence>
<name>AROE_SHEON</name>
<proteinExistence type="inferred from homology"/>
<organism>
    <name type="scientific">Shewanella oneidensis (strain ATCC 700550 / JCM 31522 / CIP 106686 / LMG 19005 / NCIMB 14063 / MR-1)</name>
    <dbReference type="NCBI Taxonomy" id="211586"/>
    <lineage>
        <taxon>Bacteria</taxon>
        <taxon>Pseudomonadati</taxon>
        <taxon>Pseudomonadota</taxon>
        <taxon>Gammaproteobacteria</taxon>
        <taxon>Alteromonadales</taxon>
        <taxon>Shewanellaceae</taxon>
        <taxon>Shewanella</taxon>
    </lineage>
</organism>
<dbReference type="EC" id="1.1.1.25" evidence="1"/>
<dbReference type="EMBL" id="AE014299">
    <property type="protein sequence ID" value="AAN53127.1"/>
    <property type="molecule type" value="Genomic_DNA"/>
</dbReference>
<dbReference type="RefSeq" id="NP_715682.1">
    <property type="nucleotide sequence ID" value="NC_004347.2"/>
</dbReference>
<dbReference type="RefSeq" id="WP_011070456.1">
    <property type="nucleotide sequence ID" value="NC_004347.2"/>
</dbReference>
<dbReference type="SMR" id="Q8EKQ0"/>
<dbReference type="STRING" id="211586.SO_0040"/>
<dbReference type="PaxDb" id="211586-SO_0040"/>
<dbReference type="KEGG" id="son:SO_0040"/>
<dbReference type="PATRIC" id="fig|211586.12.peg.40"/>
<dbReference type="eggNOG" id="COG0169">
    <property type="taxonomic scope" value="Bacteria"/>
</dbReference>
<dbReference type="HOGENOM" id="CLU_044063_2_1_6"/>
<dbReference type="OrthoDB" id="9776868at2"/>
<dbReference type="PhylomeDB" id="Q8EKQ0"/>
<dbReference type="BioCyc" id="SONE211586:G1GMP-40-MONOMER"/>
<dbReference type="UniPathway" id="UPA00053">
    <property type="reaction ID" value="UER00087"/>
</dbReference>
<dbReference type="Proteomes" id="UP000008186">
    <property type="component" value="Chromosome"/>
</dbReference>
<dbReference type="GO" id="GO:0005829">
    <property type="term" value="C:cytosol"/>
    <property type="evidence" value="ECO:0000318"/>
    <property type="project" value="GO_Central"/>
</dbReference>
<dbReference type="GO" id="GO:0050661">
    <property type="term" value="F:NADP binding"/>
    <property type="evidence" value="ECO:0000318"/>
    <property type="project" value="GO_Central"/>
</dbReference>
<dbReference type="GO" id="GO:0004764">
    <property type="term" value="F:shikimate 3-dehydrogenase (NADP+) activity"/>
    <property type="evidence" value="ECO:0000318"/>
    <property type="project" value="GO_Central"/>
</dbReference>
<dbReference type="GO" id="GO:0008652">
    <property type="term" value="P:amino acid biosynthetic process"/>
    <property type="evidence" value="ECO:0007669"/>
    <property type="project" value="UniProtKB-KW"/>
</dbReference>
<dbReference type="GO" id="GO:0009073">
    <property type="term" value="P:aromatic amino acid family biosynthetic process"/>
    <property type="evidence" value="ECO:0007669"/>
    <property type="project" value="UniProtKB-KW"/>
</dbReference>
<dbReference type="GO" id="GO:0009423">
    <property type="term" value="P:chorismate biosynthetic process"/>
    <property type="evidence" value="ECO:0000318"/>
    <property type="project" value="GO_Central"/>
</dbReference>
<dbReference type="GO" id="GO:0019632">
    <property type="term" value="P:shikimate metabolic process"/>
    <property type="evidence" value="ECO:0000318"/>
    <property type="project" value="GO_Central"/>
</dbReference>
<dbReference type="CDD" id="cd01065">
    <property type="entry name" value="NAD_bind_Shikimate_DH"/>
    <property type="match status" value="1"/>
</dbReference>
<dbReference type="FunFam" id="3.40.50.10860:FF:000006">
    <property type="entry name" value="Shikimate dehydrogenase (NADP(+))"/>
    <property type="match status" value="1"/>
</dbReference>
<dbReference type="FunFam" id="3.40.50.720:FF:000104">
    <property type="entry name" value="Shikimate dehydrogenase (NADP(+))"/>
    <property type="match status" value="1"/>
</dbReference>
<dbReference type="Gene3D" id="3.40.50.10860">
    <property type="entry name" value="Leucine Dehydrogenase, chain A, domain 1"/>
    <property type="match status" value="1"/>
</dbReference>
<dbReference type="Gene3D" id="3.40.50.720">
    <property type="entry name" value="NAD(P)-binding Rossmann-like Domain"/>
    <property type="match status" value="1"/>
</dbReference>
<dbReference type="HAMAP" id="MF_00222">
    <property type="entry name" value="Shikimate_DH_AroE"/>
    <property type="match status" value="1"/>
</dbReference>
<dbReference type="InterPro" id="IPR046346">
    <property type="entry name" value="Aminoacid_DH-like_N_sf"/>
</dbReference>
<dbReference type="InterPro" id="IPR036291">
    <property type="entry name" value="NAD(P)-bd_dom_sf"/>
</dbReference>
<dbReference type="InterPro" id="IPR041121">
    <property type="entry name" value="SDH_C"/>
</dbReference>
<dbReference type="InterPro" id="IPR011342">
    <property type="entry name" value="Shikimate_DH"/>
</dbReference>
<dbReference type="InterPro" id="IPR013708">
    <property type="entry name" value="Shikimate_DH-bd_N"/>
</dbReference>
<dbReference type="InterPro" id="IPR022893">
    <property type="entry name" value="Shikimate_DH_fam"/>
</dbReference>
<dbReference type="InterPro" id="IPR006151">
    <property type="entry name" value="Shikm_DH/Glu-tRNA_Rdtase"/>
</dbReference>
<dbReference type="NCBIfam" id="TIGR00507">
    <property type="entry name" value="aroE"/>
    <property type="match status" value="1"/>
</dbReference>
<dbReference type="NCBIfam" id="NF001310">
    <property type="entry name" value="PRK00258.1-2"/>
    <property type="match status" value="1"/>
</dbReference>
<dbReference type="PANTHER" id="PTHR21089:SF1">
    <property type="entry name" value="BIFUNCTIONAL 3-DEHYDROQUINATE DEHYDRATASE_SHIKIMATE DEHYDROGENASE, CHLOROPLASTIC"/>
    <property type="match status" value="1"/>
</dbReference>
<dbReference type="PANTHER" id="PTHR21089">
    <property type="entry name" value="SHIKIMATE DEHYDROGENASE"/>
    <property type="match status" value="1"/>
</dbReference>
<dbReference type="Pfam" id="PF18317">
    <property type="entry name" value="SDH_C"/>
    <property type="match status" value="1"/>
</dbReference>
<dbReference type="Pfam" id="PF01488">
    <property type="entry name" value="Shikimate_DH"/>
    <property type="match status" value="1"/>
</dbReference>
<dbReference type="Pfam" id="PF08501">
    <property type="entry name" value="Shikimate_dh_N"/>
    <property type="match status" value="1"/>
</dbReference>
<dbReference type="SUPFAM" id="SSF53223">
    <property type="entry name" value="Aminoacid dehydrogenase-like, N-terminal domain"/>
    <property type="match status" value="1"/>
</dbReference>
<dbReference type="SUPFAM" id="SSF51735">
    <property type="entry name" value="NAD(P)-binding Rossmann-fold domains"/>
    <property type="match status" value="1"/>
</dbReference>
<reference key="1">
    <citation type="journal article" date="2002" name="Nat. Biotechnol.">
        <title>Genome sequence of the dissimilatory metal ion-reducing bacterium Shewanella oneidensis.</title>
        <authorList>
            <person name="Heidelberg J.F."/>
            <person name="Paulsen I.T."/>
            <person name="Nelson K.E."/>
            <person name="Gaidos E.J."/>
            <person name="Nelson W.C."/>
            <person name="Read T.D."/>
            <person name="Eisen J.A."/>
            <person name="Seshadri R."/>
            <person name="Ward N.L."/>
            <person name="Methe B.A."/>
            <person name="Clayton R.A."/>
            <person name="Meyer T."/>
            <person name="Tsapin A."/>
            <person name="Scott J."/>
            <person name="Beanan M.J."/>
            <person name="Brinkac L.M."/>
            <person name="Daugherty S.C."/>
            <person name="DeBoy R.T."/>
            <person name="Dodson R.J."/>
            <person name="Durkin A.S."/>
            <person name="Haft D.H."/>
            <person name="Kolonay J.F."/>
            <person name="Madupu R."/>
            <person name="Peterson J.D."/>
            <person name="Umayam L.A."/>
            <person name="White O."/>
            <person name="Wolf A.M."/>
            <person name="Vamathevan J.J."/>
            <person name="Weidman J.F."/>
            <person name="Impraim M."/>
            <person name="Lee K."/>
            <person name="Berry K.J."/>
            <person name="Lee C."/>
            <person name="Mueller J."/>
            <person name="Khouri H.M."/>
            <person name="Gill J."/>
            <person name="Utterback T.R."/>
            <person name="McDonald L.A."/>
            <person name="Feldblyum T.V."/>
            <person name="Smith H.O."/>
            <person name="Venter J.C."/>
            <person name="Nealson K.H."/>
            <person name="Fraser C.M."/>
        </authorList>
    </citation>
    <scope>NUCLEOTIDE SEQUENCE [LARGE SCALE GENOMIC DNA]</scope>
    <source>
        <strain>ATCC 700550 / JCM 31522 / CIP 106686 / LMG 19005 / NCIMB 14063 / MR-1</strain>
    </source>
</reference>
<comment type="function">
    <text evidence="1">Involved in the biosynthesis of the chorismate, which leads to the biosynthesis of aromatic amino acids. Catalyzes the reversible NADPH linked reduction of 3-dehydroshikimate (DHSA) to yield shikimate (SA).</text>
</comment>
<comment type="catalytic activity">
    <reaction evidence="1">
        <text>shikimate + NADP(+) = 3-dehydroshikimate + NADPH + H(+)</text>
        <dbReference type="Rhea" id="RHEA:17737"/>
        <dbReference type="ChEBI" id="CHEBI:15378"/>
        <dbReference type="ChEBI" id="CHEBI:16630"/>
        <dbReference type="ChEBI" id="CHEBI:36208"/>
        <dbReference type="ChEBI" id="CHEBI:57783"/>
        <dbReference type="ChEBI" id="CHEBI:58349"/>
        <dbReference type="EC" id="1.1.1.25"/>
    </reaction>
</comment>
<comment type="pathway">
    <text evidence="1">Metabolic intermediate biosynthesis; chorismate biosynthesis; chorismate from D-erythrose 4-phosphate and phosphoenolpyruvate: step 4/7.</text>
</comment>
<comment type="subunit">
    <text evidence="1">Homodimer.</text>
</comment>
<comment type="similarity">
    <text evidence="1">Belongs to the shikimate dehydrogenase family.</text>
</comment>
<protein>
    <recommendedName>
        <fullName evidence="1">Shikimate dehydrogenase (NADP(+))</fullName>
        <shortName evidence="1">SDH</shortName>
        <ecNumber evidence="1">1.1.1.25</ecNumber>
    </recommendedName>
</protein>
<keyword id="KW-0028">Amino-acid biosynthesis</keyword>
<keyword id="KW-0057">Aromatic amino acid biosynthesis</keyword>
<keyword id="KW-0521">NADP</keyword>
<keyword id="KW-0560">Oxidoreductase</keyword>
<keyword id="KW-1185">Reference proteome</keyword>
<accession>Q8EKQ0</accession>
<gene>
    <name evidence="1" type="primary">aroE</name>
    <name type="ordered locus">SO_0040</name>
</gene>
<evidence type="ECO:0000255" key="1">
    <source>
        <dbReference type="HAMAP-Rule" id="MF_00222"/>
    </source>
</evidence>
<feature type="chain" id="PRO_0000325166" description="Shikimate dehydrogenase (NADP(+))">
    <location>
        <begin position="1"/>
        <end position="287"/>
    </location>
</feature>
<feature type="active site" description="Proton acceptor" evidence="1">
    <location>
        <position position="72"/>
    </location>
</feature>
<feature type="binding site" evidence="1">
    <location>
        <begin position="21"/>
        <end position="23"/>
    </location>
    <ligand>
        <name>shikimate</name>
        <dbReference type="ChEBI" id="CHEBI:36208"/>
    </ligand>
</feature>
<feature type="binding site" evidence="1">
    <location>
        <position position="68"/>
    </location>
    <ligand>
        <name>shikimate</name>
        <dbReference type="ChEBI" id="CHEBI:36208"/>
    </ligand>
</feature>
<feature type="binding site" evidence="1">
    <location>
        <position position="93"/>
    </location>
    <ligand>
        <name>shikimate</name>
        <dbReference type="ChEBI" id="CHEBI:36208"/>
    </ligand>
</feature>
<feature type="binding site" evidence="1">
    <location>
        <position position="109"/>
    </location>
    <ligand>
        <name>shikimate</name>
        <dbReference type="ChEBI" id="CHEBI:36208"/>
    </ligand>
</feature>
<feature type="binding site" evidence="1">
    <location>
        <begin position="133"/>
        <end position="137"/>
    </location>
    <ligand>
        <name>NADP(+)</name>
        <dbReference type="ChEBI" id="CHEBI:58349"/>
    </ligand>
</feature>
<feature type="binding site" evidence="1">
    <location>
        <begin position="157"/>
        <end position="162"/>
    </location>
    <ligand>
        <name>NADP(+)</name>
        <dbReference type="ChEBI" id="CHEBI:58349"/>
    </ligand>
</feature>
<feature type="binding site" evidence="1">
    <location>
        <position position="226"/>
    </location>
    <ligand>
        <name>NADP(+)</name>
        <dbReference type="ChEBI" id="CHEBI:58349"/>
    </ligand>
</feature>
<feature type="binding site" evidence="1">
    <location>
        <position position="228"/>
    </location>
    <ligand>
        <name>shikimate</name>
        <dbReference type="ChEBI" id="CHEBI:36208"/>
    </ligand>
</feature>
<feature type="binding site" evidence="1">
    <location>
        <position position="250"/>
    </location>
    <ligand>
        <name>NADP(+)</name>
        <dbReference type="ChEBI" id="CHEBI:58349"/>
    </ligand>
</feature>